<name>UBIE_ECO55</name>
<feature type="chain" id="PRO_1000187756" description="Ubiquinone/menaquinone biosynthesis C-methyltransferase UbiE">
    <location>
        <begin position="1"/>
        <end position="251"/>
    </location>
</feature>
<feature type="binding site" evidence="1">
    <location>
        <position position="74"/>
    </location>
    <ligand>
        <name>S-adenosyl-L-methionine</name>
        <dbReference type="ChEBI" id="CHEBI:59789"/>
    </ligand>
</feature>
<feature type="binding site" evidence="1">
    <location>
        <position position="95"/>
    </location>
    <ligand>
        <name>S-adenosyl-L-methionine</name>
        <dbReference type="ChEBI" id="CHEBI:59789"/>
    </ligand>
</feature>
<feature type="binding site" evidence="1">
    <location>
        <begin position="123"/>
        <end position="124"/>
    </location>
    <ligand>
        <name>S-adenosyl-L-methionine</name>
        <dbReference type="ChEBI" id="CHEBI:59789"/>
    </ligand>
</feature>
<feature type="binding site" evidence="1">
    <location>
        <position position="140"/>
    </location>
    <ligand>
        <name>S-adenosyl-L-methionine</name>
        <dbReference type="ChEBI" id="CHEBI:59789"/>
    </ligand>
</feature>
<gene>
    <name evidence="1" type="primary">ubiE</name>
    <name type="ordered locus">EC55989_4310</name>
</gene>
<sequence length="251" mass="28073">MVDKSQETTHFGFQTVAKEQKADMVAHVFHSVASKYDVMNDLMSFGIHRLWKRFTIDCSGVRRGQTVLDLAGGTGDLTAKFSRLVGETGKVVLADINESMLKMGREKLRNIGVIGNVEYVQANAEALPFPDNTFDCITISFGLRNVTDKDKALRSMYRVLKPGGRLLVLEFSKPIIEPLSKAYDAYSFHVLPRIGSLVANDADSYRYLAESIRMHPDQDTLKAMMQDAGFESVDYYNLTAGVVALHRGYKF</sequence>
<keyword id="KW-0474">Menaquinone biosynthesis</keyword>
<keyword id="KW-0489">Methyltransferase</keyword>
<keyword id="KW-1185">Reference proteome</keyword>
<keyword id="KW-0949">S-adenosyl-L-methionine</keyword>
<keyword id="KW-0808">Transferase</keyword>
<keyword id="KW-0831">Ubiquinone biosynthesis</keyword>
<accession>B7L996</accession>
<dbReference type="EC" id="2.1.1.163" evidence="1"/>
<dbReference type="EC" id="2.1.1.201" evidence="1"/>
<dbReference type="EMBL" id="CU928145">
    <property type="protein sequence ID" value="CAV00981.1"/>
    <property type="molecule type" value="Genomic_DNA"/>
</dbReference>
<dbReference type="RefSeq" id="WP_000227958.1">
    <property type="nucleotide sequence ID" value="NC_011748.1"/>
</dbReference>
<dbReference type="SMR" id="B7L996"/>
<dbReference type="GeneID" id="93778102"/>
<dbReference type="KEGG" id="eck:EC55989_4310"/>
<dbReference type="HOGENOM" id="CLU_037990_0_0_6"/>
<dbReference type="UniPathway" id="UPA00079">
    <property type="reaction ID" value="UER00169"/>
</dbReference>
<dbReference type="UniPathway" id="UPA00232"/>
<dbReference type="Proteomes" id="UP000000746">
    <property type="component" value="Chromosome"/>
</dbReference>
<dbReference type="GO" id="GO:0008425">
    <property type="term" value="F:2-methoxy-6-polyprenyl-1,4-benzoquinol methyltransferase activity"/>
    <property type="evidence" value="ECO:0007669"/>
    <property type="project" value="UniProtKB-UniRule"/>
</dbReference>
<dbReference type="GO" id="GO:0043770">
    <property type="term" value="F:demethylmenaquinone methyltransferase activity"/>
    <property type="evidence" value="ECO:0007669"/>
    <property type="project" value="UniProtKB-UniRule"/>
</dbReference>
<dbReference type="GO" id="GO:0009060">
    <property type="term" value="P:aerobic respiration"/>
    <property type="evidence" value="ECO:0007669"/>
    <property type="project" value="UniProtKB-UniRule"/>
</dbReference>
<dbReference type="GO" id="GO:0009234">
    <property type="term" value="P:menaquinone biosynthetic process"/>
    <property type="evidence" value="ECO:0007669"/>
    <property type="project" value="UniProtKB-UniRule"/>
</dbReference>
<dbReference type="GO" id="GO:0032259">
    <property type="term" value="P:methylation"/>
    <property type="evidence" value="ECO:0007669"/>
    <property type="project" value="UniProtKB-KW"/>
</dbReference>
<dbReference type="CDD" id="cd02440">
    <property type="entry name" value="AdoMet_MTases"/>
    <property type="match status" value="1"/>
</dbReference>
<dbReference type="FunFam" id="3.40.50.150:FF:000014">
    <property type="entry name" value="Ubiquinone/menaquinone biosynthesis C-methyltransferase UbiE"/>
    <property type="match status" value="1"/>
</dbReference>
<dbReference type="Gene3D" id="3.40.50.150">
    <property type="entry name" value="Vaccinia Virus protein VP39"/>
    <property type="match status" value="1"/>
</dbReference>
<dbReference type="HAMAP" id="MF_01813">
    <property type="entry name" value="MenG_UbiE_methyltr"/>
    <property type="match status" value="1"/>
</dbReference>
<dbReference type="InterPro" id="IPR029063">
    <property type="entry name" value="SAM-dependent_MTases_sf"/>
</dbReference>
<dbReference type="InterPro" id="IPR004033">
    <property type="entry name" value="UbiE/COQ5_MeTrFase"/>
</dbReference>
<dbReference type="InterPro" id="IPR023576">
    <property type="entry name" value="UbiE/COQ5_MeTrFase_CS"/>
</dbReference>
<dbReference type="NCBIfam" id="TIGR01934">
    <property type="entry name" value="MenG_MenH_UbiE"/>
    <property type="match status" value="1"/>
</dbReference>
<dbReference type="NCBIfam" id="NF001240">
    <property type="entry name" value="PRK00216.1-1"/>
    <property type="match status" value="1"/>
</dbReference>
<dbReference type="NCBIfam" id="NF001242">
    <property type="entry name" value="PRK00216.1-3"/>
    <property type="match status" value="1"/>
</dbReference>
<dbReference type="NCBIfam" id="NF001244">
    <property type="entry name" value="PRK00216.1-5"/>
    <property type="match status" value="1"/>
</dbReference>
<dbReference type="PANTHER" id="PTHR43591:SF24">
    <property type="entry name" value="2-METHOXY-6-POLYPRENYL-1,4-BENZOQUINOL METHYLASE, MITOCHONDRIAL"/>
    <property type="match status" value="1"/>
</dbReference>
<dbReference type="PANTHER" id="PTHR43591">
    <property type="entry name" value="METHYLTRANSFERASE"/>
    <property type="match status" value="1"/>
</dbReference>
<dbReference type="Pfam" id="PF01209">
    <property type="entry name" value="Ubie_methyltran"/>
    <property type="match status" value="1"/>
</dbReference>
<dbReference type="SUPFAM" id="SSF53335">
    <property type="entry name" value="S-adenosyl-L-methionine-dependent methyltransferases"/>
    <property type="match status" value="1"/>
</dbReference>
<dbReference type="PROSITE" id="PS51608">
    <property type="entry name" value="SAM_MT_UBIE"/>
    <property type="match status" value="1"/>
</dbReference>
<dbReference type="PROSITE" id="PS01183">
    <property type="entry name" value="UBIE_1"/>
    <property type="match status" value="1"/>
</dbReference>
<dbReference type="PROSITE" id="PS01184">
    <property type="entry name" value="UBIE_2"/>
    <property type="match status" value="1"/>
</dbReference>
<evidence type="ECO:0000255" key="1">
    <source>
        <dbReference type="HAMAP-Rule" id="MF_01813"/>
    </source>
</evidence>
<comment type="function">
    <text evidence="1">Methyltransferase required for the conversion of demethylmenaquinol (DMKH2) to menaquinol (MKH2) and the conversion of 2-polyprenyl-6-methoxy-1,4-benzoquinol (DDMQH2) to 2-polyprenyl-3-methyl-6-methoxy-1,4-benzoquinol (DMQH2).</text>
</comment>
<comment type="catalytic activity">
    <reaction evidence="1">
        <text>a 2-demethylmenaquinol + S-adenosyl-L-methionine = a menaquinol + S-adenosyl-L-homocysteine + H(+)</text>
        <dbReference type="Rhea" id="RHEA:42640"/>
        <dbReference type="Rhea" id="RHEA-COMP:9539"/>
        <dbReference type="Rhea" id="RHEA-COMP:9563"/>
        <dbReference type="ChEBI" id="CHEBI:15378"/>
        <dbReference type="ChEBI" id="CHEBI:18151"/>
        <dbReference type="ChEBI" id="CHEBI:55437"/>
        <dbReference type="ChEBI" id="CHEBI:57856"/>
        <dbReference type="ChEBI" id="CHEBI:59789"/>
        <dbReference type="EC" id="2.1.1.163"/>
    </reaction>
</comment>
<comment type="catalytic activity">
    <reaction evidence="1">
        <text>a 2-methoxy-6-(all-trans-polyprenyl)benzene-1,4-diol + S-adenosyl-L-methionine = a 5-methoxy-2-methyl-3-(all-trans-polyprenyl)benzene-1,4-diol + S-adenosyl-L-homocysteine + H(+)</text>
        <dbReference type="Rhea" id="RHEA:28286"/>
        <dbReference type="Rhea" id="RHEA-COMP:10858"/>
        <dbReference type="Rhea" id="RHEA-COMP:10859"/>
        <dbReference type="ChEBI" id="CHEBI:15378"/>
        <dbReference type="ChEBI" id="CHEBI:57856"/>
        <dbReference type="ChEBI" id="CHEBI:59789"/>
        <dbReference type="ChEBI" id="CHEBI:84166"/>
        <dbReference type="ChEBI" id="CHEBI:84167"/>
        <dbReference type="EC" id="2.1.1.201"/>
    </reaction>
</comment>
<comment type="pathway">
    <text evidence="1">Quinol/quinone metabolism; menaquinone biosynthesis; menaquinol from 1,4-dihydroxy-2-naphthoate: step 2/2.</text>
</comment>
<comment type="pathway">
    <text evidence="1">Cofactor biosynthesis; ubiquinone biosynthesis.</text>
</comment>
<comment type="similarity">
    <text evidence="1">Belongs to the class I-like SAM-binding methyltransferase superfamily. MenG/UbiE family.</text>
</comment>
<reference key="1">
    <citation type="journal article" date="2009" name="PLoS Genet.">
        <title>Organised genome dynamics in the Escherichia coli species results in highly diverse adaptive paths.</title>
        <authorList>
            <person name="Touchon M."/>
            <person name="Hoede C."/>
            <person name="Tenaillon O."/>
            <person name="Barbe V."/>
            <person name="Baeriswyl S."/>
            <person name="Bidet P."/>
            <person name="Bingen E."/>
            <person name="Bonacorsi S."/>
            <person name="Bouchier C."/>
            <person name="Bouvet O."/>
            <person name="Calteau A."/>
            <person name="Chiapello H."/>
            <person name="Clermont O."/>
            <person name="Cruveiller S."/>
            <person name="Danchin A."/>
            <person name="Diard M."/>
            <person name="Dossat C."/>
            <person name="Karoui M.E."/>
            <person name="Frapy E."/>
            <person name="Garry L."/>
            <person name="Ghigo J.M."/>
            <person name="Gilles A.M."/>
            <person name="Johnson J."/>
            <person name="Le Bouguenec C."/>
            <person name="Lescat M."/>
            <person name="Mangenot S."/>
            <person name="Martinez-Jehanne V."/>
            <person name="Matic I."/>
            <person name="Nassif X."/>
            <person name="Oztas S."/>
            <person name="Petit M.A."/>
            <person name="Pichon C."/>
            <person name="Rouy Z."/>
            <person name="Ruf C.S."/>
            <person name="Schneider D."/>
            <person name="Tourret J."/>
            <person name="Vacherie B."/>
            <person name="Vallenet D."/>
            <person name="Medigue C."/>
            <person name="Rocha E.P.C."/>
            <person name="Denamur E."/>
        </authorList>
    </citation>
    <scope>NUCLEOTIDE SEQUENCE [LARGE SCALE GENOMIC DNA]</scope>
    <source>
        <strain>55989 / EAEC</strain>
    </source>
</reference>
<organism>
    <name type="scientific">Escherichia coli (strain 55989 / EAEC)</name>
    <dbReference type="NCBI Taxonomy" id="585055"/>
    <lineage>
        <taxon>Bacteria</taxon>
        <taxon>Pseudomonadati</taxon>
        <taxon>Pseudomonadota</taxon>
        <taxon>Gammaproteobacteria</taxon>
        <taxon>Enterobacterales</taxon>
        <taxon>Enterobacteriaceae</taxon>
        <taxon>Escherichia</taxon>
    </lineage>
</organism>
<protein>
    <recommendedName>
        <fullName evidence="1">Ubiquinone/menaquinone biosynthesis C-methyltransferase UbiE</fullName>
        <ecNumber evidence="1">2.1.1.163</ecNumber>
        <ecNumber evidence="1">2.1.1.201</ecNumber>
    </recommendedName>
    <alternativeName>
        <fullName evidence="1">2-methoxy-6-polyprenyl-1,4-benzoquinol methylase</fullName>
    </alternativeName>
    <alternativeName>
        <fullName evidence="1">Demethylmenaquinone methyltransferase</fullName>
    </alternativeName>
</protein>
<proteinExistence type="inferred from homology"/>